<comment type="function">
    <text evidence="1">Catalyzes two activities which are involved in the cyclic version of arginine biosynthesis: the synthesis of N-acetylglutamate from glutamate and acetyl-CoA as the acetyl donor, and of ornithine by transacetylation between N(2)-acetylornithine and glutamate.</text>
</comment>
<comment type="catalytic activity">
    <reaction evidence="1">
        <text>N(2)-acetyl-L-ornithine + L-glutamate = N-acetyl-L-glutamate + L-ornithine</text>
        <dbReference type="Rhea" id="RHEA:15349"/>
        <dbReference type="ChEBI" id="CHEBI:29985"/>
        <dbReference type="ChEBI" id="CHEBI:44337"/>
        <dbReference type="ChEBI" id="CHEBI:46911"/>
        <dbReference type="ChEBI" id="CHEBI:57805"/>
        <dbReference type="EC" id="2.3.1.35"/>
    </reaction>
</comment>
<comment type="catalytic activity">
    <reaction evidence="1">
        <text>L-glutamate + acetyl-CoA = N-acetyl-L-glutamate + CoA + H(+)</text>
        <dbReference type="Rhea" id="RHEA:24292"/>
        <dbReference type="ChEBI" id="CHEBI:15378"/>
        <dbReference type="ChEBI" id="CHEBI:29985"/>
        <dbReference type="ChEBI" id="CHEBI:44337"/>
        <dbReference type="ChEBI" id="CHEBI:57287"/>
        <dbReference type="ChEBI" id="CHEBI:57288"/>
        <dbReference type="EC" id="2.3.1.1"/>
    </reaction>
</comment>
<comment type="pathway">
    <text evidence="1">Amino-acid biosynthesis; L-arginine biosynthesis; L-ornithine and N-acetyl-L-glutamate from L-glutamate and N(2)-acetyl-L-ornithine (cyclic): step 1/1.</text>
</comment>
<comment type="pathway">
    <text evidence="1">Amino-acid biosynthesis; L-arginine biosynthesis; N(2)-acetyl-L-ornithine from L-glutamate: step 1/4.</text>
</comment>
<comment type="subunit">
    <text evidence="1">Heterotetramer of two alpha and two beta chains.</text>
</comment>
<comment type="subcellular location">
    <subcellularLocation>
        <location evidence="1">Cytoplasm</location>
    </subcellularLocation>
</comment>
<comment type="similarity">
    <text evidence="1">Belongs to the ArgJ family.</text>
</comment>
<sequence>MSDGEEKPDGFSFAGIAAGLKDSNKKDLALILAPENSICSGLFTQSIVRASCVDICEQRIKKSSGLIRAILINSGQANACTGDYGIQHTLFATKEVSQLLGINEEEVLMCSTGVIGIPIQIKNLIDNLPNLVKELKTNSLQNAAEAILTTDLVDKKITIETFIEGRKVKISGFAKGSGMIYPNMATMLAFLTCDVGVDKEEWDKMISIAVKKSFNAISVDGETSTNDAFIGINSGKKIDKKFLSKIQSGIDIVCQSLAKNIARDGEGANCLLEVLVEGAKSNSDAIKIAKSICNSSLVKTAINGCDPNWGRIISAAGNSGIDFKLDFLDLYIGDFQILKKGKLNKYDSKKVANYMQTRMNGKYLVEDIVSISLHLNSGSEKGTAWGCDLSKKYVEINSEYTT</sequence>
<proteinExistence type="inferred from homology"/>
<accession>Q7V3M5</accession>
<reference key="1">
    <citation type="journal article" date="2003" name="Nature">
        <title>Genome divergence in two Prochlorococcus ecotypes reflects oceanic niche differentiation.</title>
        <authorList>
            <person name="Rocap G."/>
            <person name="Larimer F.W."/>
            <person name="Lamerdin J.E."/>
            <person name="Malfatti S."/>
            <person name="Chain P."/>
            <person name="Ahlgren N.A."/>
            <person name="Arellano A."/>
            <person name="Coleman M."/>
            <person name="Hauser L."/>
            <person name="Hess W.R."/>
            <person name="Johnson Z.I."/>
            <person name="Land M.L."/>
            <person name="Lindell D."/>
            <person name="Post A.F."/>
            <person name="Regala W."/>
            <person name="Shah M."/>
            <person name="Shaw S.L."/>
            <person name="Steglich C."/>
            <person name="Sullivan M.B."/>
            <person name="Ting C.S."/>
            <person name="Tolonen A."/>
            <person name="Webb E.A."/>
            <person name="Zinser E.R."/>
            <person name="Chisholm S.W."/>
        </authorList>
    </citation>
    <scope>NUCLEOTIDE SEQUENCE [LARGE SCALE GENOMIC DNA]</scope>
    <source>
        <strain>CCMP1986 / NIES-2087 / MED4</strain>
    </source>
</reference>
<gene>
    <name evidence="1" type="primary">argJ</name>
    <name type="ordered locus">PMM0050</name>
</gene>
<protein>
    <recommendedName>
        <fullName evidence="1">Arginine biosynthesis bifunctional protein ArgJ</fullName>
    </recommendedName>
    <domain>
        <recommendedName>
            <fullName evidence="1">Glutamate N-acetyltransferase</fullName>
            <ecNumber evidence="1">2.3.1.35</ecNumber>
        </recommendedName>
        <alternativeName>
            <fullName evidence="1">Ornithine acetyltransferase</fullName>
            <shortName evidence="1">OATase</shortName>
        </alternativeName>
        <alternativeName>
            <fullName evidence="1">Ornithine transacetylase</fullName>
        </alternativeName>
    </domain>
    <domain>
        <recommendedName>
            <fullName evidence="1">Amino-acid acetyltransferase</fullName>
            <ecNumber evidence="1">2.3.1.1</ecNumber>
        </recommendedName>
        <alternativeName>
            <fullName evidence="1">N-acetylglutamate synthase</fullName>
            <shortName evidence="1">AGSase</shortName>
        </alternativeName>
    </domain>
    <component>
        <recommendedName>
            <fullName evidence="1">Arginine biosynthesis bifunctional protein ArgJ alpha chain</fullName>
        </recommendedName>
    </component>
    <component>
        <recommendedName>
            <fullName evidence="1">Arginine biosynthesis bifunctional protein ArgJ beta chain</fullName>
        </recommendedName>
    </component>
</protein>
<keyword id="KW-0012">Acyltransferase</keyword>
<keyword id="KW-0028">Amino-acid biosynthesis</keyword>
<keyword id="KW-0055">Arginine biosynthesis</keyword>
<keyword id="KW-0068">Autocatalytic cleavage</keyword>
<keyword id="KW-0963">Cytoplasm</keyword>
<keyword id="KW-0511">Multifunctional enzyme</keyword>
<keyword id="KW-0808">Transferase</keyword>
<organism>
    <name type="scientific">Prochlorococcus marinus subsp. pastoris (strain CCMP1986 / NIES-2087 / MED4)</name>
    <dbReference type="NCBI Taxonomy" id="59919"/>
    <lineage>
        <taxon>Bacteria</taxon>
        <taxon>Bacillati</taxon>
        <taxon>Cyanobacteriota</taxon>
        <taxon>Cyanophyceae</taxon>
        <taxon>Synechococcales</taxon>
        <taxon>Prochlorococcaceae</taxon>
        <taxon>Prochlorococcus</taxon>
    </lineage>
</organism>
<evidence type="ECO:0000255" key="1">
    <source>
        <dbReference type="HAMAP-Rule" id="MF_01106"/>
    </source>
</evidence>
<feature type="chain" id="PRO_0000002211" description="Arginine biosynthesis bifunctional protein ArgJ alpha chain" evidence="1">
    <location>
        <begin position="1"/>
        <end position="185"/>
    </location>
</feature>
<feature type="chain" id="PRO_0000002212" description="Arginine biosynthesis bifunctional protein ArgJ beta chain" evidence="1">
    <location>
        <begin position="186"/>
        <end position="402"/>
    </location>
</feature>
<feature type="active site" description="Nucleophile" evidence="1">
    <location>
        <position position="186"/>
    </location>
</feature>
<feature type="binding site" evidence="1">
    <location>
        <position position="149"/>
    </location>
    <ligand>
        <name>substrate</name>
    </ligand>
</feature>
<feature type="binding site" evidence="1">
    <location>
        <position position="175"/>
    </location>
    <ligand>
        <name>substrate</name>
    </ligand>
</feature>
<feature type="binding site" evidence="1">
    <location>
        <position position="186"/>
    </location>
    <ligand>
        <name>substrate</name>
    </ligand>
</feature>
<feature type="binding site" evidence="1">
    <location>
        <position position="266"/>
    </location>
    <ligand>
        <name>substrate</name>
    </ligand>
</feature>
<feature type="binding site" evidence="1">
    <location>
        <position position="397"/>
    </location>
    <ligand>
        <name>substrate</name>
    </ligand>
</feature>
<feature type="binding site" evidence="1">
    <location>
        <position position="402"/>
    </location>
    <ligand>
        <name>substrate</name>
    </ligand>
</feature>
<feature type="site" description="Involved in the stabilization of negative charge on the oxyanion by the formation of the oxyanion hole" evidence="1">
    <location>
        <position position="112"/>
    </location>
</feature>
<feature type="site" description="Involved in the stabilization of negative charge on the oxyanion by the formation of the oxyanion hole" evidence="1">
    <location>
        <position position="113"/>
    </location>
</feature>
<feature type="site" description="Cleavage; by autolysis" evidence="1">
    <location>
        <begin position="185"/>
        <end position="186"/>
    </location>
</feature>
<dbReference type="EC" id="2.3.1.35" evidence="1"/>
<dbReference type="EC" id="2.3.1.1" evidence="1"/>
<dbReference type="EMBL" id="BX548174">
    <property type="protein sequence ID" value="CAE18509.1"/>
    <property type="molecule type" value="Genomic_DNA"/>
</dbReference>
<dbReference type="SMR" id="Q7V3M5"/>
<dbReference type="STRING" id="59919.PMM0050"/>
<dbReference type="MEROPS" id="T05.002"/>
<dbReference type="KEGG" id="pmm:PMM0050"/>
<dbReference type="eggNOG" id="COG1364">
    <property type="taxonomic scope" value="Bacteria"/>
</dbReference>
<dbReference type="HOGENOM" id="CLU_027172_1_0_3"/>
<dbReference type="UniPathway" id="UPA00068">
    <property type="reaction ID" value="UER00106"/>
</dbReference>
<dbReference type="UniPathway" id="UPA00068">
    <property type="reaction ID" value="UER00111"/>
</dbReference>
<dbReference type="Proteomes" id="UP000001026">
    <property type="component" value="Chromosome"/>
</dbReference>
<dbReference type="GO" id="GO:0005737">
    <property type="term" value="C:cytoplasm"/>
    <property type="evidence" value="ECO:0007669"/>
    <property type="project" value="UniProtKB-SubCell"/>
</dbReference>
<dbReference type="GO" id="GO:0004358">
    <property type="term" value="F:glutamate N-acetyltransferase activity"/>
    <property type="evidence" value="ECO:0007669"/>
    <property type="project" value="UniProtKB-UniRule"/>
</dbReference>
<dbReference type="GO" id="GO:0004042">
    <property type="term" value="F:L-glutamate N-acetyltransferase activity"/>
    <property type="evidence" value="ECO:0007669"/>
    <property type="project" value="UniProtKB-UniRule"/>
</dbReference>
<dbReference type="GO" id="GO:0006526">
    <property type="term" value="P:L-arginine biosynthetic process"/>
    <property type="evidence" value="ECO:0007669"/>
    <property type="project" value="UniProtKB-UniRule"/>
</dbReference>
<dbReference type="GO" id="GO:0006592">
    <property type="term" value="P:ornithine biosynthetic process"/>
    <property type="evidence" value="ECO:0007669"/>
    <property type="project" value="TreeGrafter"/>
</dbReference>
<dbReference type="CDD" id="cd02152">
    <property type="entry name" value="OAT"/>
    <property type="match status" value="1"/>
</dbReference>
<dbReference type="FunFam" id="3.10.20.340:FF:000001">
    <property type="entry name" value="Arginine biosynthesis bifunctional protein ArgJ, chloroplastic"/>
    <property type="match status" value="1"/>
</dbReference>
<dbReference type="FunFam" id="3.60.70.12:FF:000001">
    <property type="entry name" value="Arginine biosynthesis bifunctional protein ArgJ, chloroplastic"/>
    <property type="match status" value="1"/>
</dbReference>
<dbReference type="Gene3D" id="3.10.20.340">
    <property type="entry name" value="ArgJ beta chain, C-terminal domain"/>
    <property type="match status" value="1"/>
</dbReference>
<dbReference type="Gene3D" id="3.60.70.12">
    <property type="entry name" value="L-amino peptidase D-ALA esterase/amidase"/>
    <property type="match status" value="1"/>
</dbReference>
<dbReference type="HAMAP" id="MF_01106">
    <property type="entry name" value="ArgJ"/>
    <property type="match status" value="1"/>
</dbReference>
<dbReference type="InterPro" id="IPR002813">
    <property type="entry name" value="Arg_biosynth_ArgJ"/>
</dbReference>
<dbReference type="InterPro" id="IPR016117">
    <property type="entry name" value="ArgJ-like_dom_sf"/>
</dbReference>
<dbReference type="InterPro" id="IPR042195">
    <property type="entry name" value="ArgJ_beta_C"/>
</dbReference>
<dbReference type="NCBIfam" id="TIGR00120">
    <property type="entry name" value="ArgJ"/>
    <property type="match status" value="1"/>
</dbReference>
<dbReference type="NCBIfam" id="NF003802">
    <property type="entry name" value="PRK05388.1"/>
    <property type="match status" value="1"/>
</dbReference>
<dbReference type="PANTHER" id="PTHR23100">
    <property type="entry name" value="ARGININE BIOSYNTHESIS BIFUNCTIONAL PROTEIN ARGJ"/>
    <property type="match status" value="1"/>
</dbReference>
<dbReference type="PANTHER" id="PTHR23100:SF0">
    <property type="entry name" value="ARGININE BIOSYNTHESIS BIFUNCTIONAL PROTEIN ARGJ, MITOCHONDRIAL"/>
    <property type="match status" value="1"/>
</dbReference>
<dbReference type="Pfam" id="PF01960">
    <property type="entry name" value="ArgJ"/>
    <property type="match status" value="1"/>
</dbReference>
<dbReference type="SUPFAM" id="SSF56266">
    <property type="entry name" value="DmpA/ArgJ-like"/>
    <property type="match status" value="1"/>
</dbReference>
<name>ARGJ_PROMP</name>